<keyword id="KW-0156">Chromatin regulator</keyword>
<keyword id="KW-0217">Developmental protein</keyword>
<keyword id="KW-0221">Differentiation</keyword>
<keyword id="KW-0287">Flowering</keyword>
<keyword id="KW-0489">Methyltransferase</keyword>
<keyword id="KW-0539">Nucleus</keyword>
<keyword id="KW-1185">Reference proteome</keyword>
<keyword id="KW-0949">S-adenosyl-L-methionine</keyword>
<keyword id="KW-0804">Transcription</keyword>
<keyword id="KW-0805">Transcription regulation</keyword>
<keyword id="KW-0808">Transferase</keyword>
<reference key="1">
    <citation type="journal article" date="2003" name="J. Exp. Bot.">
        <title>OsSET1, a novel SET-domain-containing gene from rice.</title>
        <authorList>
            <person name="Liang Y.K."/>
            <person name="Wang Y."/>
            <person name="Zhang Y."/>
            <person name="Li S.G."/>
            <person name="Lu X.C."/>
            <person name="Li H."/>
            <person name="Zou C."/>
            <person name="Xu Z.H."/>
            <person name="Bai S.N."/>
        </authorList>
    </citation>
    <scope>NUCLEOTIDE SEQUENCE [MRNA]</scope>
    <scope>SUBCELLULAR LOCATION</scope>
</reference>
<reference key="2">
    <citation type="submission" date="2010-12" db="EMBL/GenBank/DDBJ databases">
        <title>Functional analysis of gene related to development in rice.</title>
        <authorList>
            <person name="Kim D.Y."/>
            <person name="Yoon I.S."/>
        </authorList>
    </citation>
    <scope>NUCLEOTIDE SEQUENCE [MRNA]</scope>
</reference>
<reference key="3">
    <citation type="journal article" date="2005" name="Genome Res.">
        <title>Sequence, annotation, and analysis of synteny between rice chromosome 3 and diverged grass species.</title>
        <authorList>
            <consortium name="The rice chromosome 3 sequencing consortium"/>
            <person name="Buell C.R."/>
            <person name="Yuan Q."/>
            <person name="Ouyang S."/>
            <person name="Liu J."/>
            <person name="Zhu W."/>
            <person name="Wang A."/>
            <person name="Maiti R."/>
            <person name="Haas B."/>
            <person name="Wortman J."/>
            <person name="Pertea M."/>
            <person name="Jones K.M."/>
            <person name="Kim M."/>
            <person name="Overton L."/>
            <person name="Tsitrin T."/>
            <person name="Fadrosh D."/>
            <person name="Bera J."/>
            <person name="Weaver B."/>
            <person name="Jin S."/>
            <person name="Johri S."/>
            <person name="Reardon M."/>
            <person name="Webb K."/>
            <person name="Hill J."/>
            <person name="Moffat K."/>
            <person name="Tallon L."/>
            <person name="Van Aken S."/>
            <person name="Lewis M."/>
            <person name="Utterback T."/>
            <person name="Feldblyum T."/>
            <person name="Zismann V."/>
            <person name="Iobst S."/>
            <person name="Hsiao J."/>
            <person name="de Vazeille A.R."/>
            <person name="Salzberg S.L."/>
            <person name="White O."/>
            <person name="Fraser C.M."/>
            <person name="Yu Y."/>
            <person name="Kim H."/>
            <person name="Rambo T."/>
            <person name="Currie J."/>
            <person name="Collura K."/>
            <person name="Kernodle-Thompson S."/>
            <person name="Wei F."/>
            <person name="Kudrna K."/>
            <person name="Ammiraju J.S.S."/>
            <person name="Luo M."/>
            <person name="Goicoechea J.L."/>
            <person name="Wing R.A."/>
            <person name="Henry D."/>
            <person name="Oates R."/>
            <person name="Palmer M."/>
            <person name="Pries G."/>
            <person name="Saski C."/>
            <person name="Simmons J."/>
            <person name="Soderlund C."/>
            <person name="Nelson W."/>
            <person name="de la Bastide M."/>
            <person name="Spiegel L."/>
            <person name="Nascimento L."/>
            <person name="Huang E."/>
            <person name="Preston R."/>
            <person name="Zutavern T."/>
            <person name="Palmer L."/>
            <person name="O'Shaughnessy A."/>
            <person name="Dike S."/>
            <person name="McCombie W.R."/>
            <person name="Minx P."/>
            <person name="Cordum H."/>
            <person name="Wilson R."/>
            <person name="Jin W."/>
            <person name="Lee H.R."/>
            <person name="Jiang J."/>
            <person name="Jackson S."/>
        </authorList>
    </citation>
    <scope>NUCLEOTIDE SEQUENCE [LARGE SCALE GENOMIC DNA]</scope>
    <source>
        <strain>cv. Nipponbare</strain>
    </source>
</reference>
<reference key="4">
    <citation type="journal article" date="2005" name="Nature">
        <title>The map-based sequence of the rice genome.</title>
        <authorList>
            <consortium name="International rice genome sequencing project (IRGSP)"/>
        </authorList>
    </citation>
    <scope>NUCLEOTIDE SEQUENCE [LARGE SCALE GENOMIC DNA]</scope>
    <source>
        <strain>cv. Nipponbare</strain>
    </source>
</reference>
<reference key="5">
    <citation type="journal article" date="2008" name="Nucleic Acids Res.">
        <title>The rice annotation project database (RAP-DB): 2008 update.</title>
        <authorList>
            <consortium name="The rice annotation project (RAP)"/>
        </authorList>
    </citation>
    <scope>GENOME REANNOTATION</scope>
    <source>
        <strain>cv. Nipponbare</strain>
    </source>
</reference>
<reference key="6">
    <citation type="journal article" date="2013" name="Rice">
        <title>Improvement of the Oryza sativa Nipponbare reference genome using next generation sequence and optical map data.</title>
        <authorList>
            <person name="Kawahara Y."/>
            <person name="de la Bastide M."/>
            <person name="Hamilton J.P."/>
            <person name="Kanamori H."/>
            <person name="McCombie W.R."/>
            <person name="Ouyang S."/>
            <person name="Schwartz D.C."/>
            <person name="Tanaka T."/>
            <person name="Wu J."/>
            <person name="Zhou S."/>
            <person name="Childs K.L."/>
            <person name="Davidson R.M."/>
            <person name="Lin H."/>
            <person name="Quesada-Ocampo L."/>
            <person name="Vaillancourt B."/>
            <person name="Sakai H."/>
            <person name="Lee S.S."/>
            <person name="Kim J."/>
            <person name="Numa H."/>
            <person name="Itoh T."/>
            <person name="Buell C.R."/>
            <person name="Matsumoto T."/>
        </authorList>
    </citation>
    <scope>GENOME REANNOTATION</scope>
    <source>
        <strain>cv. Nipponbare</strain>
    </source>
</reference>
<reference key="7">
    <citation type="journal article" date="2005" name="PLoS Biol.">
        <title>The genomes of Oryza sativa: a history of duplications.</title>
        <authorList>
            <person name="Yu J."/>
            <person name="Wang J."/>
            <person name="Lin W."/>
            <person name="Li S."/>
            <person name="Li H."/>
            <person name="Zhou J."/>
            <person name="Ni P."/>
            <person name="Dong W."/>
            <person name="Hu S."/>
            <person name="Zeng C."/>
            <person name="Zhang J."/>
            <person name="Zhang Y."/>
            <person name="Li R."/>
            <person name="Xu Z."/>
            <person name="Li S."/>
            <person name="Li X."/>
            <person name="Zheng H."/>
            <person name="Cong L."/>
            <person name="Lin L."/>
            <person name="Yin J."/>
            <person name="Geng J."/>
            <person name="Li G."/>
            <person name="Shi J."/>
            <person name="Liu J."/>
            <person name="Lv H."/>
            <person name="Li J."/>
            <person name="Wang J."/>
            <person name="Deng Y."/>
            <person name="Ran L."/>
            <person name="Shi X."/>
            <person name="Wang X."/>
            <person name="Wu Q."/>
            <person name="Li C."/>
            <person name="Ren X."/>
            <person name="Wang J."/>
            <person name="Wang X."/>
            <person name="Li D."/>
            <person name="Liu D."/>
            <person name="Zhang X."/>
            <person name="Ji Z."/>
            <person name="Zhao W."/>
            <person name="Sun Y."/>
            <person name="Zhang Z."/>
            <person name="Bao J."/>
            <person name="Han Y."/>
            <person name="Dong L."/>
            <person name="Ji J."/>
            <person name="Chen P."/>
            <person name="Wu S."/>
            <person name="Liu J."/>
            <person name="Xiao Y."/>
            <person name="Bu D."/>
            <person name="Tan J."/>
            <person name="Yang L."/>
            <person name="Ye C."/>
            <person name="Zhang J."/>
            <person name="Xu J."/>
            <person name="Zhou Y."/>
            <person name="Yu Y."/>
            <person name="Zhang B."/>
            <person name="Zhuang S."/>
            <person name="Wei H."/>
            <person name="Liu B."/>
            <person name="Lei M."/>
            <person name="Yu H."/>
            <person name="Li Y."/>
            <person name="Xu H."/>
            <person name="Wei S."/>
            <person name="He X."/>
            <person name="Fang L."/>
            <person name="Zhang Z."/>
            <person name="Zhang Y."/>
            <person name="Huang X."/>
            <person name="Su Z."/>
            <person name="Tong W."/>
            <person name="Li J."/>
            <person name="Tong Z."/>
            <person name="Li S."/>
            <person name="Ye J."/>
            <person name="Wang L."/>
            <person name="Fang L."/>
            <person name="Lei T."/>
            <person name="Chen C.-S."/>
            <person name="Chen H.-C."/>
            <person name="Xu Z."/>
            <person name="Li H."/>
            <person name="Huang H."/>
            <person name="Zhang F."/>
            <person name="Xu H."/>
            <person name="Li N."/>
            <person name="Zhao C."/>
            <person name="Li S."/>
            <person name="Dong L."/>
            <person name="Huang Y."/>
            <person name="Li L."/>
            <person name="Xi Y."/>
            <person name="Qi Q."/>
            <person name="Li W."/>
            <person name="Zhang B."/>
            <person name="Hu W."/>
            <person name="Zhang Y."/>
            <person name="Tian X."/>
            <person name="Jiao Y."/>
            <person name="Liang X."/>
            <person name="Jin J."/>
            <person name="Gao L."/>
            <person name="Zheng W."/>
            <person name="Hao B."/>
            <person name="Liu S.-M."/>
            <person name="Wang W."/>
            <person name="Yuan L."/>
            <person name="Cao M."/>
            <person name="McDermott J."/>
            <person name="Samudrala R."/>
            <person name="Wang J."/>
            <person name="Wong G.K.-S."/>
            <person name="Yang H."/>
        </authorList>
    </citation>
    <scope>NUCLEOTIDE SEQUENCE [LARGE SCALE GENOMIC DNA]</scope>
    <source>
        <strain>cv. Nipponbare</strain>
    </source>
</reference>
<reference key="8">
    <citation type="journal article" date="2009" name="Mol. Plant">
        <title>Expression, imprinting, and evolution of rice homologs of the polycomb group genes.</title>
        <authorList>
            <person name="Luo M."/>
            <person name="Platten D."/>
            <person name="Chaudhury A."/>
            <person name="Peacock W.J."/>
            <person name="Dennis E.S."/>
        </authorList>
    </citation>
    <scope>TISSUE SPECIFICITY</scope>
</reference>
<reference key="9">
    <citation type="journal article" date="2012" name="Plant Biotechnol. Rep.">
        <title>Involvement of rice polycomb protein OsFIE2 in plant growth and seed size.</title>
        <authorList>
            <person name="Na J.K."/>
            <person name="Seo M.H."/>
            <person name="Yoon I.S."/>
            <person name="Lee Y.H."/>
            <person name="Lee K.O."/>
            <person name="Kim D.Y."/>
        </authorList>
    </citation>
    <scope>INTERACTION WITH FIE2</scope>
    <scope>TISSUE SPECIFICITY</scope>
</reference>
<reference key="10">
    <citation type="journal article" date="2012" name="Plant Cell">
        <title>Identification and characterization of an epi-allele of FIE1 reveals a regulatory linkage between two epigenetic marks in rice.</title>
        <authorList>
            <person name="Zhang L."/>
            <person name="Cheng Z."/>
            <person name="Qin R."/>
            <person name="Qiu Y."/>
            <person name="Wang J.L."/>
            <person name="Cui X."/>
            <person name="Gu L."/>
            <person name="Zhang X."/>
            <person name="Guo X."/>
            <person name="Wang D."/>
            <person name="Jiang L."/>
            <person name="Wu C.Y."/>
            <person name="Wang H."/>
            <person name="Cao X."/>
            <person name="Wan J."/>
        </authorList>
    </citation>
    <scope>INTERACTION WITH FIE1 AND FIE2</scope>
</reference>
<reference key="11">
    <citation type="journal article" date="2013" name="PLoS Genet.">
        <title>Polycomb group gene OsFIE2 regulates rice (Oryza sativa) seed development and grain filling via a mechanism distinct from Arabidopsis.</title>
        <authorList>
            <person name="Nallamilli B.R."/>
            <person name="Zhang J."/>
            <person name="Mujahid H."/>
            <person name="Malone B.M."/>
            <person name="Bridges S.M."/>
            <person name="Peng Z."/>
        </authorList>
    </citation>
    <scope>IDENTIFICATION BY MASS SPECTROMETRY</scope>
    <scope>SUBUNIT</scope>
    <scope>INTERACTION WITH FIE2</scope>
</reference>
<reference key="12">
    <citation type="journal article" date="2013" name="PLoS ONE">
        <title>Genome-wide identification, phylogenetic and co-expression analysis of OsSET gene family in rice.</title>
        <authorList>
            <person name="Lu Z."/>
            <person name="Huang X."/>
            <person name="Ouyang Y."/>
            <person name="Yao J."/>
        </authorList>
    </citation>
    <scope>DEVELOPMENTAL STAGE</scope>
    <scope>GENE FAMILY</scope>
    <scope>NOMENCLATURE</scope>
</reference>
<reference key="13">
    <citation type="journal article" date="2014" name="Front. Plant Sci.">
        <title>The rice enhancer of zeste [E(z)] genes SDG711 and SDG718 are respectively involved in long day and short day signaling to mediate the accurate photoperiod control of flowering time.</title>
        <authorList>
            <person name="Liu X."/>
            <person name="Zhou C."/>
            <person name="Zhao Y."/>
            <person name="Zhou S."/>
            <person name="Wang W."/>
            <person name="Zhou D.X."/>
        </authorList>
    </citation>
    <scope>FUNCTION</scope>
</reference>
<dbReference type="EC" id="2.1.1.356" evidence="2"/>
<dbReference type="EMBL" id="AF407010">
    <property type="protein sequence ID" value="AAN01115.1"/>
    <property type="molecule type" value="mRNA"/>
</dbReference>
<dbReference type="EMBL" id="HQ881586">
    <property type="protein sequence ID" value="AEJ08686.1"/>
    <property type="molecule type" value="mRNA"/>
</dbReference>
<dbReference type="EMBL" id="DP000009">
    <property type="protein sequence ID" value="ABF95544.1"/>
    <property type="molecule type" value="Genomic_DNA"/>
</dbReference>
<dbReference type="EMBL" id="AP008209">
    <property type="protein sequence ID" value="BAF11813.1"/>
    <property type="molecule type" value="Genomic_DNA"/>
</dbReference>
<dbReference type="EMBL" id="AP014959">
    <property type="protein sequence ID" value="BAS83828.1"/>
    <property type="molecule type" value="Genomic_DNA"/>
</dbReference>
<dbReference type="EMBL" id="CM000140">
    <property type="protein sequence ID" value="EEE58920.1"/>
    <property type="molecule type" value="Genomic_DNA"/>
</dbReference>
<dbReference type="RefSeq" id="XP_015630972.1">
    <property type="nucleotide sequence ID" value="XM_015775486.1"/>
</dbReference>
<dbReference type="SMR" id="Q10MI4"/>
<dbReference type="FunCoup" id="Q10MI4">
    <property type="interactions" value="901"/>
</dbReference>
<dbReference type="STRING" id="39947.Q10MI4"/>
<dbReference type="PaxDb" id="39947-Q10MI4"/>
<dbReference type="EnsemblPlants" id="Os03t0307800-01">
    <property type="protein sequence ID" value="Os03t0307800-01"/>
    <property type="gene ID" value="Os03g0307800"/>
</dbReference>
<dbReference type="Gramene" id="Os03t0307800-01">
    <property type="protein sequence ID" value="Os03t0307800-01"/>
    <property type="gene ID" value="Os03g0307800"/>
</dbReference>
<dbReference type="KEGG" id="dosa:Os03g0307800"/>
<dbReference type="eggNOG" id="KOG1079">
    <property type="taxonomic scope" value="Eukaryota"/>
</dbReference>
<dbReference type="HOGENOM" id="CLU_011060_0_0_1"/>
<dbReference type="InParanoid" id="Q10MI4"/>
<dbReference type="OMA" id="DMCAGST"/>
<dbReference type="OrthoDB" id="6141102at2759"/>
<dbReference type="Proteomes" id="UP000000763">
    <property type="component" value="Chromosome 3"/>
</dbReference>
<dbReference type="Proteomes" id="UP000007752">
    <property type="component" value="Chromosome 3"/>
</dbReference>
<dbReference type="Proteomes" id="UP000059680">
    <property type="component" value="Chromosome 3"/>
</dbReference>
<dbReference type="GO" id="GO:0005677">
    <property type="term" value="C:chromatin silencing complex"/>
    <property type="evidence" value="ECO:0007669"/>
    <property type="project" value="EnsemblPlants"/>
</dbReference>
<dbReference type="GO" id="GO:0005634">
    <property type="term" value="C:nucleus"/>
    <property type="evidence" value="ECO:0000318"/>
    <property type="project" value="GO_Central"/>
</dbReference>
<dbReference type="GO" id="GO:0031519">
    <property type="term" value="C:PcG protein complex"/>
    <property type="evidence" value="ECO:0000314"/>
    <property type="project" value="UniProtKB"/>
</dbReference>
<dbReference type="GO" id="GO:0003682">
    <property type="term" value="F:chromatin binding"/>
    <property type="evidence" value="ECO:0000318"/>
    <property type="project" value="GO_Central"/>
</dbReference>
<dbReference type="GO" id="GO:0046976">
    <property type="term" value="F:histone H3K27 methyltransferase activity"/>
    <property type="evidence" value="ECO:0000315"/>
    <property type="project" value="UniProtKB"/>
</dbReference>
<dbReference type="GO" id="GO:0140951">
    <property type="term" value="F:histone H3K27 trimethyltransferase activity"/>
    <property type="evidence" value="ECO:0007669"/>
    <property type="project" value="UniProtKB-EC"/>
</dbReference>
<dbReference type="GO" id="GO:0003727">
    <property type="term" value="F:single-stranded RNA binding"/>
    <property type="evidence" value="ECO:0007669"/>
    <property type="project" value="EnsemblPlants"/>
</dbReference>
<dbReference type="GO" id="GO:1990110">
    <property type="term" value="P:callus formation"/>
    <property type="evidence" value="ECO:0007669"/>
    <property type="project" value="EnsemblPlants"/>
</dbReference>
<dbReference type="GO" id="GO:0030154">
    <property type="term" value="P:cell differentiation"/>
    <property type="evidence" value="ECO:0007669"/>
    <property type="project" value="UniProtKB-KW"/>
</dbReference>
<dbReference type="GO" id="GO:0009908">
    <property type="term" value="P:flower development"/>
    <property type="evidence" value="ECO:0007669"/>
    <property type="project" value="UniProtKB-KW"/>
</dbReference>
<dbReference type="GO" id="GO:0031507">
    <property type="term" value="P:heterochromatin formation"/>
    <property type="evidence" value="ECO:0000315"/>
    <property type="project" value="UniProtKB"/>
</dbReference>
<dbReference type="GO" id="GO:0032259">
    <property type="term" value="P:methylation"/>
    <property type="evidence" value="ECO:0007669"/>
    <property type="project" value="UniProtKB-KW"/>
</dbReference>
<dbReference type="GO" id="GO:1900055">
    <property type="term" value="P:regulation of leaf senescence"/>
    <property type="evidence" value="ECO:0007669"/>
    <property type="project" value="EnsemblPlants"/>
</dbReference>
<dbReference type="GO" id="GO:0048587">
    <property type="term" value="P:regulation of short-day photoperiodism, flowering"/>
    <property type="evidence" value="ECO:0000315"/>
    <property type="project" value="UniProtKB"/>
</dbReference>
<dbReference type="GO" id="GO:0009737">
    <property type="term" value="P:response to abscisic acid"/>
    <property type="evidence" value="ECO:0007669"/>
    <property type="project" value="EnsemblPlants"/>
</dbReference>
<dbReference type="GO" id="GO:0010048">
    <property type="term" value="P:vernalization response"/>
    <property type="evidence" value="ECO:0007669"/>
    <property type="project" value="EnsemblPlants"/>
</dbReference>
<dbReference type="CDD" id="cd00167">
    <property type="entry name" value="SANT"/>
    <property type="match status" value="1"/>
</dbReference>
<dbReference type="CDD" id="cd10519">
    <property type="entry name" value="SET_EZH"/>
    <property type="match status" value="1"/>
</dbReference>
<dbReference type="FunFam" id="2.170.270.10:FF:000001">
    <property type="entry name" value="Putative histone-lysine N-methyltransferase EZH2"/>
    <property type="match status" value="1"/>
</dbReference>
<dbReference type="Gene3D" id="2.170.270.10">
    <property type="entry name" value="SET domain"/>
    <property type="match status" value="1"/>
</dbReference>
<dbReference type="InterPro" id="IPR026489">
    <property type="entry name" value="CXC_dom"/>
</dbReference>
<dbReference type="InterPro" id="IPR045318">
    <property type="entry name" value="EZH1/2-like"/>
</dbReference>
<dbReference type="InterPro" id="IPR025778">
    <property type="entry name" value="Hist-Lys_N-MeTrfase_plant"/>
</dbReference>
<dbReference type="InterPro" id="IPR041355">
    <property type="entry name" value="Pre-SET_CXC"/>
</dbReference>
<dbReference type="InterPro" id="IPR001005">
    <property type="entry name" value="SANT/Myb"/>
</dbReference>
<dbReference type="InterPro" id="IPR001214">
    <property type="entry name" value="SET_dom"/>
</dbReference>
<dbReference type="InterPro" id="IPR046341">
    <property type="entry name" value="SET_dom_sf"/>
</dbReference>
<dbReference type="InterPro" id="IPR033467">
    <property type="entry name" value="Tesmin/TSO1-like_CXC"/>
</dbReference>
<dbReference type="PANTHER" id="PTHR45747">
    <property type="entry name" value="HISTONE-LYSINE N-METHYLTRANSFERASE E(Z)"/>
    <property type="match status" value="1"/>
</dbReference>
<dbReference type="PANTHER" id="PTHR45747:SF14">
    <property type="entry name" value="HISTONE-LYSINE N-METHYLTRANSFERASE EZA1"/>
    <property type="match status" value="1"/>
</dbReference>
<dbReference type="Pfam" id="PF18264">
    <property type="entry name" value="preSET_CXC"/>
    <property type="match status" value="1"/>
</dbReference>
<dbReference type="Pfam" id="PF00856">
    <property type="entry name" value="SET"/>
    <property type="match status" value="1"/>
</dbReference>
<dbReference type="SMART" id="SM01114">
    <property type="entry name" value="CXC"/>
    <property type="match status" value="1"/>
</dbReference>
<dbReference type="SMART" id="SM00317">
    <property type="entry name" value="SET"/>
    <property type="match status" value="1"/>
</dbReference>
<dbReference type="SUPFAM" id="SSF82199">
    <property type="entry name" value="SET domain"/>
    <property type="match status" value="1"/>
</dbReference>
<dbReference type="PROSITE" id="PS51633">
    <property type="entry name" value="CXC"/>
    <property type="match status" value="1"/>
</dbReference>
<dbReference type="PROSITE" id="PS51576">
    <property type="entry name" value="SAM_MT43_EZ"/>
    <property type="match status" value="1"/>
</dbReference>
<dbReference type="PROSITE" id="PS50280">
    <property type="entry name" value="SET"/>
    <property type="match status" value="1"/>
</dbReference>
<protein>
    <recommendedName>
        <fullName evidence="16">Histone-lysine N-methyltransferase EZ1</fullName>
        <ecNumber evidence="2">2.1.1.356</ecNumber>
    </recommendedName>
    <alternativeName>
        <fullName evidence="16">Protein SET DOMAIN GROUP 718</fullName>
    </alternativeName>
    <alternativeName>
        <fullName evidence="16">SET family protein 1</fullName>
        <shortName evidence="12">OsSET1</shortName>
    </alternativeName>
    <alternativeName>
        <fullName evidence="16">SET family protein 15</fullName>
        <shortName evidence="13">OsSET15</shortName>
    </alternativeName>
</protein>
<gene>
    <name evidence="15" type="primary">EZ1</name>
    <name evidence="14" type="synonym">SDG718</name>
    <name evidence="12" type="synonym">SET1</name>
    <name evidence="19" type="ordered locus">Os03g0307800</name>
    <name evidence="18" type="ordered locus">LOC_Os03g19480</name>
    <name evidence="20" type="ORF">OsJ_10569</name>
</gene>
<sequence>MASSSSKASDSSSQRPKRPDQGPSGKDAAGLVALHGKLAQLKRQVQSTRLAAIKERVEANRKALQVHTCALFDVAAAAEVASRGAEGGNALSRGAAEGHRRFVGWDSASGPGERELVHVQEENLVAGTLVLSSSGGSGASHRTVVQLVKLPVVDKIPPYTTWIFLDKNQRMADDQSVGRRRIYYDPIVNEALICSESDDDVPEPEEEKHVFTEGEDQLIWKATQDHGLSREVLNVLCQFVDATPSEIEERSEVLFEKYEKQSQSSYKTDLQLFLDKTMDVALDSFDNLFCRRCLVFDCRLHGCSQNLVFPSEKQPYGHELDENKRPCGDQCYLRRREVYQDTCNDDRNACTTYNMDSRSSSLKVSATILSESEDSNRDEDNIKSTSIVETSRSKITNSEYADKSVTPPPGDASETENVSPDMPLRTLGRRKISKHASKSNDHSPDKRQKIYSSPFPFAMSVLNKQSVPEIGETCPDSIESAVDQLPSLDDPNKKISTKDMCAGSTTNTTENTLRDNNNNLFISNKEHSISHWSALERDLYLKGIEIFGKNSCLIARNLLSGLKTCMEVASYMYNNGAAMAKRPLSGKSILGDFAEAEQGYMEQDLVARTRICRRKGRARKLKYTWKSAGHPTVRKRIGDGKQWYTQYNPCGCQQMCGKDCACVENGTCCEKYCGCSKSCKNRFRGCHCAKSQCRSRQCPCFAASRECDPDVCRNCWVSCGDGSLGEPLARGDGYQCGNMKLLLKQQQRILLGKSDVAGWGAFIKNPVNRNDYLGEYTGELISHREADKRGKIYDRANSSFLFDLNEQYVLDAYRKGDKLKFANHSSNPNCYAKVMLVAGDHRVGIYAKDRIEASEELFYDYRYGPDQAPAWARRPEGSKKDEASVSHHRAHKVAR</sequence>
<comment type="function">
    <text evidence="10 17">Polycomb group (PcG) protein. Catalytic subunit of some PcG multiprotein complex, which methylates 'Lys-27' of histone H3, leading to transcriptional repression of the affected target genes. PcG proteins act by forming multiprotein complexes, which are required to maintain the transcriptionally repressive state of homeotic genes throughout development. PcG proteins are not required to initiate repression, but to maintain it during later stages of development (Probable). Involved in the regulation of flowering. Promotes flowering under short day (SD) conditions. Regulates the trimethylation on histone H3 'Lys-27' (H3K27me3) of the flowering regulator LF (PubMed:25400654).</text>
</comment>
<comment type="catalytic activity">
    <reaction evidence="2">
        <text>L-lysyl(27)-[histone H3] + 3 S-adenosyl-L-methionine = N(6),N(6),N(6)-trimethyl-L-lysyl(27)-[histone H3] + 3 S-adenosyl-L-homocysteine + 3 H(+)</text>
        <dbReference type="Rhea" id="RHEA:60292"/>
        <dbReference type="Rhea" id="RHEA-COMP:15535"/>
        <dbReference type="Rhea" id="RHEA-COMP:15548"/>
        <dbReference type="ChEBI" id="CHEBI:15378"/>
        <dbReference type="ChEBI" id="CHEBI:29969"/>
        <dbReference type="ChEBI" id="CHEBI:57856"/>
        <dbReference type="ChEBI" id="CHEBI:59789"/>
        <dbReference type="ChEBI" id="CHEBI:61961"/>
        <dbReference type="EC" id="2.1.1.356"/>
    </reaction>
</comment>
<comment type="subunit">
    <text evidence="7 8 11">Interacts with FIE1 (PubMed:23150632). Interacts with FIE2 (PubMed:23150632, PubMed:23505380, Ref.9). Component of the polycomb repressive complex 2 (PRC2), composed of the core PRC2 components FIE2, EMF2B and CLF. PRC2 methylates 'Lys-27' residues of histone H3 (H3K27me3), leading to transcriptional repression of the affected target gene.</text>
</comment>
<comment type="subcellular location">
    <subcellularLocation>
        <location evidence="5">Nucleus</location>
    </subcellularLocation>
</comment>
<comment type="tissue specificity">
    <text evidence="6 11">Widely expressed (PubMed:19825651). Expressed in leaves and stems. Expressed a low levels in roots, anthers, ovaries and ovules (Ref.9).</text>
</comment>
<comment type="developmental stage">
    <text evidence="9">Highly expressed in seed endosperm 7 days after pollination.</text>
</comment>
<comment type="miscellaneous">
    <text evidence="10">Down-regulation of EZ1 delays flowering in short day (SD), but has no effect in long day (LD).</text>
</comment>
<comment type="similarity">
    <text evidence="2">Belongs to the class V-like SAM-binding methyltransferase superfamily. Histone-lysine methyltransferase family. EZ subfamily.</text>
</comment>
<evidence type="ECO:0000255" key="1">
    <source>
        <dbReference type="PROSITE-ProRule" id="PRU00190"/>
    </source>
</evidence>
<evidence type="ECO:0000255" key="2">
    <source>
        <dbReference type="PROSITE-ProRule" id="PRU00909"/>
    </source>
</evidence>
<evidence type="ECO:0000255" key="3">
    <source>
        <dbReference type="PROSITE-ProRule" id="PRU00970"/>
    </source>
</evidence>
<evidence type="ECO:0000256" key="4">
    <source>
        <dbReference type="SAM" id="MobiDB-lite"/>
    </source>
</evidence>
<evidence type="ECO:0000269" key="5">
    <source>
    </source>
</evidence>
<evidence type="ECO:0000269" key="6">
    <source>
    </source>
</evidence>
<evidence type="ECO:0000269" key="7">
    <source>
    </source>
</evidence>
<evidence type="ECO:0000269" key="8">
    <source>
    </source>
</evidence>
<evidence type="ECO:0000269" key="9">
    <source>
    </source>
</evidence>
<evidence type="ECO:0000269" key="10">
    <source>
    </source>
</evidence>
<evidence type="ECO:0000269" key="11">
    <source ref="9"/>
</evidence>
<evidence type="ECO:0000303" key="12">
    <source>
    </source>
</evidence>
<evidence type="ECO:0000303" key="13">
    <source>
    </source>
</evidence>
<evidence type="ECO:0000303" key="14">
    <source>
    </source>
</evidence>
<evidence type="ECO:0000303" key="15">
    <source ref="9"/>
</evidence>
<evidence type="ECO:0000305" key="16"/>
<evidence type="ECO:0000305" key="17">
    <source>
    </source>
</evidence>
<evidence type="ECO:0000312" key="18">
    <source>
        <dbReference type="EMBL" id="ABF95544.1"/>
    </source>
</evidence>
<evidence type="ECO:0000312" key="19">
    <source>
        <dbReference type="EMBL" id="BAF11813.1"/>
    </source>
</evidence>
<evidence type="ECO:0000312" key="20">
    <source>
        <dbReference type="EMBL" id="EEE58920.1"/>
    </source>
</evidence>
<accession>Q10MI4</accession>
<accession>Q8LLD6</accession>
<organism>
    <name type="scientific">Oryza sativa subsp. japonica</name>
    <name type="common">Rice</name>
    <dbReference type="NCBI Taxonomy" id="39947"/>
    <lineage>
        <taxon>Eukaryota</taxon>
        <taxon>Viridiplantae</taxon>
        <taxon>Streptophyta</taxon>
        <taxon>Embryophyta</taxon>
        <taxon>Tracheophyta</taxon>
        <taxon>Spermatophyta</taxon>
        <taxon>Magnoliopsida</taxon>
        <taxon>Liliopsida</taxon>
        <taxon>Poales</taxon>
        <taxon>Poaceae</taxon>
        <taxon>BOP clade</taxon>
        <taxon>Oryzoideae</taxon>
        <taxon>Oryzeae</taxon>
        <taxon>Oryzinae</taxon>
        <taxon>Oryza</taxon>
        <taxon>Oryza sativa</taxon>
    </lineage>
</organism>
<feature type="chain" id="PRO_0000444467" description="Histone-lysine N-methyltransferase EZ1">
    <location>
        <begin position="1"/>
        <end position="895"/>
    </location>
</feature>
<feature type="domain" description="CXC" evidence="3">
    <location>
        <begin position="628"/>
        <end position="732"/>
    </location>
</feature>
<feature type="domain" description="SET" evidence="1">
    <location>
        <begin position="747"/>
        <end position="862"/>
    </location>
</feature>
<feature type="region of interest" description="Disordered" evidence="4">
    <location>
        <begin position="1"/>
        <end position="28"/>
    </location>
</feature>
<feature type="region of interest" description="Disordered" evidence="4">
    <location>
        <begin position="369"/>
        <end position="425"/>
    </location>
</feature>
<feature type="region of interest" description="Disordered" evidence="4">
    <location>
        <begin position="485"/>
        <end position="508"/>
    </location>
</feature>
<feature type="region of interest" description="Disordered" evidence="4">
    <location>
        <begin position="867"/>
        <end position="895"/>
    </location>
</feature>
<feature type="compositionally biased region" description="Low complexity" evidence="4">
    <location>
        <begin position="1"/>
        <end position="13"/>
    </location>
</feature>
<feature type="compositionally biased region" description="Polar residues" evidence="4">
    <location>
        <begin position="383"/>
        <end position="399"/>
    </location>
</feature>
<feature type="compositionally biased region" description="Basic and acidic residues" evidence="4">
    <location>
        <begin position="873"/>
        <end position="885"/>
    </location>
</feature>
<feature type="compositionally biased region" description="Basic residues" evidence="4">
    <location>
        <begin position="886"/>
        <end position="895"/>
    </location>
</feature>
<feature type="binding site" evidence="1">
    <location>
        <position position="861"/>
    </location>
    <ligand>
        <name>S-adenosyl-L-methionine</name>
        <dbReference type="ChEBI" id="CHEBI:59789"/>
    </ligand>
</feature>
<feature type="sequence conflict" description="In Ref. 1; AAN01115 and 2; AEJ08686." evidence="16" ref="1 2">
    <original>M</original>
    <variation>V</variation>
    <location>
        <position position="572"/>
    </location>
</feature>
<feature type="sequence conflict" description="In Ref. 1; AAN01115 and 2; AEJ08686." evidence="16" ref="1 2">
    <original>L</original>
    <variation>P</variation>
    <location>
        <position position="728"/>
    </location>
</feature>
<feature type="sequence conflict" description="In Ref. 1; AAN01115 and 2; AEJ08686." evidence="16" ref="1 2">
    <original>K</original>
    <variation>N</variation>
    <location>
        <position position="818"/>
    </location>
</feature>
<proteinExistence type="evidence at protein level"/>
<name>EZ1_ORYSJ</name>